<gene>
    <name evidence="1" type="primary">rpsO</name>
    <name type="ordered locus">Dgeo_2190</name>
</gene>
<comment type="function">
    <text evidence="1">One of the primary rRNA binding proteins, it binds directly to 16S rRNA where it helps nucleate assembly of the platform of the 30S subunit by binding and bridging several RNA helices of the 16S rRNA.</text>
</comment>
<comment type="function">
    <text evidence="1">Forms an intersubunit bridge (bridge B4) with the 23S rRNA of the 50S subunit in the ribosome.</text>
</comment>
<comment type="subunit">
    <text evidence="1">Part of the 30S ribosomal subunit. Forms a bridge to the 50S subunit in the 70S ribosome, contacting the 23S rRNA.</text>
</comment>
<comment type="similarity">
    <text evidence="1">Belongs to the universal ribosomal protein uS15 family.</text>
</comment>
<feature type="chain" id="PRO_0000255489" description="Small ribosomal subunit protein uS15">
    <location>
        <begin position="1"/>
        <end position="91"/>
    </location>
</feature>
<dbReference type="EMBL" id="CP000359">
    <property type="protein sequence ID" value="ABF46484.1"/>
    <property type="molecule type" value="Genomic_DNA"/>
</dbReference>
<dbReference type="RefSeq" id="WP_011531309.1">
    <property type="nucleotide sequence ID" value="NC_008025.1"/>
</dbReference>
<dbReference type="SMR" id="Q1IWA0"/>
<dbReference type="STRING" id="319795.Dgeo_2190"/>
<dbReference type="KEGG" id="dge:Dgeo_2190"/>
<dbReference type="eggNOG" id="COG0184">
    <property type="taxonomic scope" value="Bacteria"/>
</dbReference>
<dbReference type="HOGENOM" id="CLU_148518_0_0_0"/>
<dbReference type="Proteomes" id="UP000002431">
    <property type="component" value="Chromosome"/>
</dbReference>
<dbReference type="GO" id="GO:0022627">
    <property type="term" value="C:cytosolic small ribosomal subunit"/>
    <property type="evidence" value="ECO:0007669"/>
    <property type="project" value="TreeGrafter"/>
</dbReference>
<dbReference type="GO" id="GO:0019843">
    <property type="term" value="F:rRNA binding"/>
    <property type="evidence" value="ECO:0007669"/>
    <property type="project" value="UniProtKB-UniRule"/>
</dbReference>
<dbReference type="GO" id="GO:0003735">
    <property type="term" value="F:structural constituent of ribosome"/>
    <property type="evidence" value="ECO:0007669"/>
    <property type="project" value="InterPro"/>
</dbReference>
<dbReference type="GO" id="GO:0006412">
    <property type="term" value="P:translation"/>
    <property type="evidence" value="ECO:0007669"/>
    <property type="project" value="UniProtKB-UniRule"/>
</dbReference>
<dbReference type="CDD" id="cd00353">
    <property type="entry name" value="Ribosomal_S15p_S13e"/>
    <property type="match status" value="1"/>
</dbReference>
<dbReference type="FunFam" id="1.10.287.10:FF:000002">
    <property type="entry name" value="30S ribosomal protein S15"/>
    <property type="match status" value="1"/>
</dbReference>
<dbReference type="Gene3D" id="6.10.250.3130">
    <property type="match status" value="1"/>
</dbReference>
<dbReference type="Gene3D" id="1.10.287.10">
    <property type="entry name" value="S15/NS1, RNA-binding"/>
    <property type="match status" value="1"/>
</dbReference>
<dbReference type="HAMAP" id="MF_01343_B">
    <property type="entry name" value="Ribosomal_uS15_B"/>
    <property type="match status" value="1"/>
</dbReference>
<dbReference type="InterPro" id="IPR000589">
    <property type="entry name" value="Ribosomal_uS15"/>
</dbReference>
<dbReference type="InterPro" id="IPR005290">
    <property type="entry name" value="Ribosomal_uS15_bac-type"/>
</dbReference>
<dbReference type="InterPro" id="IPR009068">
    <property type="entry name" value="uS15_NS1_RNA-bd_sf"/>
</dbReference>
<dbReference type="NCBIfam" id="TIGR00952">
    <property type="entry name" value="S15_bact"/>
    <property type="match status" value="1"/>
</dbReference>
<dbReference type="PANTHER" id="PTHR23321">
    <property type="entry name" value="RIBOSOMAL PROTEIN S15, BACTERIAL AND ORGANELLAR"/>
    <property type="match status" value="1"/>
</dbReference>
<dbReference type="PANTHER" id="PTHR23321:SF26">
    <property type="entry name" value="SMALL RIBOSOMAL SUBUNIT PROTEIN US15M"/>
    <property type="match status" value="1"/>
</dbReference>
<dbReference type="Pfam" id="PF00312">
    <property type="entry name" value="Ribosomal_S15"/>
    <property type="match status" value="1"/>
</dbReference>
<dbReference type="SMART" id="SM01387">
    <property type="entry name" value="Ribosomal_S15"/>
    <property type="match status" value="1"/>
</dbReference>
<dbReference type="SUPFAM" id="SSF47060">
    <property type="entry name" value="S15/NS1 RNA-binding domain"/>
    <property type="match status" value="1"/>
</dbReference>
<dbReference type="PROSITE" id="PS00362">
    <property type="entry name" value="RIBOSOMAL_S15"/>
    <property type="match status" value="1"/>
</dbReference>
<evidence type="ECO:0000255" key="1">
    <source>
        <dbReference type="HAMAP-Rule" id="MF_01343"/>
    </source>
</evidence>
<evidence type="ECO:0000305" key="2"/>
<organism>
    <name type="scientific">Deinococcus geothermalis (strain DSM 11300 / CIP 105573 / AG-3a)</name>
    <dbReference type="NCBI Taxonomy" id="319795"/>
    <lineage>
        <taxon>Bacteria</taxon>
        <taxon>Thermotogati</taxon>
        <taxon>Deinococcota</taxon>
        <taxon>Deinococci</taxon>
        <taxon>Deinococcales</taxon>
        <taxon>Deinococcaceae</taxon>
        <taxon>Deinococcus</taxon>
    </lineage>
</organism>
<sequence>MIDKQKTIQTYAKSANDTGSTAVQVALLTERINNLSRHLTENKKDKHGQRGLQLLNGQRRRLLKYLERTNYDEYIALTDRLGIRRGQRIVR</sequence>
<protein>
    <recommendedName>
        <fullName evidence="1">Small ribosomal subunit protein uS15</fullName>
    </recommendedName>
    <alternativeName>
        <fullName evidence="2">30S ribosomal protein S15</fullName>
    </alternativeName>
</protein>
<reference key="1">
    <citation type="submission" date="2006-04" db="EMBL/GenBank/DDBJ databases">
        <title>Complete sequence of chromosome of Deinococcus geothermalis DSM 11300.</title>
        <authorList>
            <person name="Copeland A."/>
            <person name="Lucas S."/>
            <person name="Lapidus A."/>
            <person name="Barry K."/>
            <person name="Detter J.C."/>
            <person name="Glavina del Rio T."/>
            <person name="Hammon N."/>
            <person name="Israni S."/>
            <person name="Dalin E."/>
            <person name="Tice H."/>
            <person name="Pitluck S."/>
            <person name="Brettin T."/>
            <person name="Bruce D."/>
            <person name="Han C."/>
            <person name="Tapia R."/>
            <person name="Saunders E."/>
            <person name="Gilna P."/>
            <person name="Schmutz J."/>
            <person name="Larimer F."/>
            <person name="Land M."/>
            <person name="Hauser L."/>
            <person name="Kyrpides N."/>
            <person name="Kim E."/>
            <person name="Daly M.J."/>
            <person name="Fredrickson J.K."/>
            <person name="Makarova K.S."/>
            <person name="Gaidamakova E.K."/>
            <person name="Zhai M."/>
            <person name="Richardson P."/>
        </authorList>
    </citation>
    <scope>NUCLEOTIDE SEQUENCE [LARGE SCALE GENOMIC DNA]</scope>
    <source>
        <strain>DSM 11300 / CIP 105573 / AG-3a</strain>
    </source>
</reference>
<accession>Q1IWA0</accession>
<proteinExistence type="inferred from homology"/>
<name>RS15_DEIGD</name>
<keyword id="KW-0687">Ribonucleoprotein</keyword>
<keyword id="KW-0689">Ribosomal protein</keyword>
<keyword id="KW-0694">RNA-binding</keyword>
<keyword id="KW-0699">rRNA-binding</keyword>